<dbReference type="EMBL" id="BX548174">
    <property type="protein sequence ID" value="CAE18773.1"/>
    <property type="molecule type" value="Genomic_DNA"/>
</dbReference>
<dbReference type="RefSeq" id="WP_011131951.1">
    <property type="nucleotide sequence ID" value="NC_005072.1"/>
</dbReference>
<dbReference type="SMR" id="Q7V2Y5"/>
<dbReference type="STRING" id="59919.PMM0314"/>
<dbReference type="KEGG" id="pmm:PMM0314"/>
<dbReference type="eggNOG" id="ENOG5031U72">
    <property type="taxonomic scope" value="Bacteria"/>
</dbReference>
<dbReference type="HOGENOM" id="CLU_217078_1_0_3"/>
<dbReference type="OrthoDB" id="427659at2"/>
<dbReference type="Proteomes" id="UP000001026">
    <property type="component" value="Chromosome"/>
</dbReference>
<dbReference type="GO" id="GO:0009539">
    <property type="term" value="C:photosystem II reaction center"/>
    <property type="evidence" value="ECO:0007669"/>
    <property type="project" value="InterPro"/>
</dbReference>
<dbReference type="GO" id="GO:0031676">
    <property type="term" value="C:plasma membrane-derived thylakoid membrane"/>
    <property type="evidence" value="ECO:0007669"/>
    <property type="project" value="UniProtKB-SubCell"/>
</dbReference>
<dbReference type="GO" id="GO:0015979">
    <property type="term" value="P:photosynthesis"/>
    <property type="evidence" value="ECO:0007669"/>
    <property type="project" value="UniProtKB-UniRule"/>
</dbReference>
<dbReference type="HAMAP" id="MF_00808">
    <property type="entry name" value="PSII_PsbT"/>
    <property type="match status" value="1"/>
</dbReference>
<dbReference type="InterPro" id="IPR001743">
    <property type="entry name" value="PSII_PsbT"/>
</dbReference>
<dbReference type="InterPro" id="IPR037268">
    <property type="entry name" value="PSII_PsbT_sf"/>
</dbReference>
<dbReference type="NCBIfam" id="NF008825">
    <property type="entry name" value="PRK11875.1"/>
    <property type="match status" value="1"/>
</dbReference>
<dbReference type="Pfam" id="PF01405">
    <property type="entry name" value="PsbT"/>
    <property type="match status" value="1"/>
</dbReference>
<dbReference type="SUPFAM" id="SSF161029">
    <property type="entry name" value="Photosystem II reaction center protein T, PsbT"/>
    <property type="match status" value="1"/>
</dbReference>
<sequence length="32" mass="3690">MEAFAYVLILTLAVVTLFFAVAFRDPPKFDRK</sequence>
<proteinExistence type="inferred from homology"/>
<accession>Q7V2Y5</accession>
<comment type="function">
    <text evidence="1">Found at the monomer-monomer interface of the photosystem II (PS II) dimer, plays a role in assembly and dimerization of PSII. PSII is a light-driven water plastoquinone oxidoreductase, using light energy to abstract electrons from H(2)O, generating a proton gradient subsequently used for ATP formation.</text>
</comment>
<comment type="subunit">
    <text evidence="2">PSII is composed of 1 copy each of membrane proteins PsbA, PsbB, PsbC, PsbD, PsbE, PsbF, PsbH, PsbI, PsbJ, PsbK, PsbL, PsbM, PsbT, PsbX, PsbY, Psb30/Ycf12, peripheral proteins PsbO, CyanoQ (PsbQ), PsbU, PsbV and a large number of cofactors. It forms dimeric complexes.</text>
</comment>
<comment type="subcellular location">
    <subcellularLocation>
        <location evidence="1">Cellular thylakoid membrane</location>
        <topology evidence="1">Single-pass membrane protein</topology>
    </subcellularLocation>
</comment>
<comment type="similarity">
    <text evidence="1">Belongs to the PsbT family.</text>
</comment>
<evidence type="ECO:0000255" key="1">
    <source>
        <dbReference type="HAMAP-Rule" id="MF_00808"/>
    </source>
</evidence>
<evidence type="ECO:0000305" key="2"/>
<protein>
    <recommendedName>
        <fullName evidence="1">Photosystem II reaction center protein T</fullName>
        <shortName evidence="1">PSII-T</shortName>
    </recommendedName>
</protein>
<organism>
    <name type="scientific">Prochlorococcus marinus subsp. pastoris (strain CCMP1986 / NIES-2087 / MED4)</name>
    <dbReference type="NCBI Taxonomy" id="59919"/>
    <lineage>
        <taxon>Bacteria</taxon>
        <taxon>Bacillati</taxon>
        <taxon>Cyanobacteriota</taxon>
        <taxon>Cyanophyceae</taxon>
        <taxon>Synechococcales</taxon>
        <taxon>Prochlorococcaceae</taxon>
        <taxon>Prochlorococcus</taxon>
    </lineage>
</organism>
<name>PSBT_PROMP</name>
<gene>
    <name evidence="1" type="primary">psbT</name>
    <name type="ordered locus">PMM0314</name>
</gene>
<keyword id="KW-0472">Membrane</keyword>
<keyword id="KW-0602">Photosynthesis</keyword>
<keyword id="KW-0604">Photosystem II</keyword>
<keyword id="KW-0793">Thylakoid</keyword>
<keyword id="KW-0812">Transmembrane</keyword>
<keyword id="KW-1133">Transmembrane helix</keyword>
<reference key="1">
    <citation type="journal article" date="2003" name="Nature">
        <title>Genome divergence in two Prochlorococcus ecotypes reflects oceanic niche differentiation.</title>
        <authorList>
            <person name="Rocap G."/>
            <person name="Larimer F.W."/>
            <person name="Lamerdin J.E."/>
            <person name="Malfatti S."/>
            <person name="Chain P."/>
            <person name="Ahlgren N.A."/>
            <person name="Arellano A."/>
            <person name="Coleman M."/>
            <person name="Hauser L."/>
            <person name="Hess W.R."/>
            <person name="Johnson Z.I."/>
            <person name="Land M.L."/>
            <person name="Lindell D."/>
            <person name="Post A.F."/>
            <person name="Regala W."/>
            <person name="Shah M."/>
            <person name="Shaw S.L."/>
            <person name="Steglich C."/>
            <person name="Sullivan M.B."/>
            <person name="Ting C.S."/>
            <person name="Tolonen A."/>
            <person name="Webb E.A."/>
            <person name="Zinser E.R."/>
            <person name="Chisholm S.W."/>
        </authorList>
    </citation>
    <scope>NUCLEOTIDE SEQUENCE [LARGE SCALE GENOMIC DNA]</scope>
    <source>
        <strain>CCMP1986 / NIES-2087 / MED4</strain>
    </source>
</reference>
<feature type="chain" id="PRO_0000218003" description="Photosystem II reaction center protein T">
    <location>
        <begin position="1"/>
        <end position="32"/>
    </location>
</feature>
<feature type="transmembrane region" description="Helical" evidence="1">
    <location>
        <begin position="3"/>
        <end position="23"/>
    </location>
</feature>